<proteinExistence type="inferred from homology"/>
<name>MDTL_SHIDS</name>
<gene>
    <name evidence="2" type="primary">mdtL</name>
    <name type="ordered locus">SDY_4203</name>
</gene>
<protein>
    <recommendedName>
        <fullName evidence="2">Multidrug resistance protein MdtL</fullName>
    </recommendedName>
</protein>
<reference key="1">
    <citation type="journal article" date="2005" name="Nucleic Acids Res.">
        <title>Genome dynamics and diversity of Shigella species, the etiologic agents of bacillary dysentery.</title>
        <authorList>
            <person name="Yang F."/>
            <person name="Yang J."/>
            <person name="Zhang X."/>
            <person name="Chen L."/>
            <person name="Jiang Y."/>
            <person name="Yan Y."/>
            <person name="Tang X."/>
            <person name="Wang J."/>
            <person name="Xiong Z."/>
            <person name="Dong J."/>
            <person name="Xue Y."/>
            <person name="Zhu Y."/>
            <person name="Xu X."/>
            <person name="Sun L."/>
            <person name="Chen S."/>
            <person name="Nie H."/>
            <person name="Peng J."/>
            <person name="Xu J."/>
            <person name="Wang Y."/>
            <person name="Yuan Z."/>
            <person name="Wen Y."/>
            <person name="Yao Z."/>
            <person name="Shen Y."/>
            <person name="Qiang B."/>
            <person name="Hou Y."/>
            <person name="Yu J."/>
            <person name="Jin Q."/>
        </authorList>
    </citation>
    <scope>NUCLEOTIDE SEQUENCE [LARGE SCALE GENOMIC DNA]</scope>
    <source>
        <strain>Sd197</strain>
    </source>
</reference>
<sequence>MSRFLICSFALVLLYPAGIDMYLVGLPRIAADLNASEAQLHIAFSVYLAGMAAAMLFAGKVADRSGRKPVAIPGAALFIIASVFCSLAETSTLFLAGRFLQGLGAGCCYVVAFAILRDTLDDRRRAKVLSLLNGITCIIPVLAPVLGHLIMLKFPWQSLFWTMAIMGIAVLMLSLFILKETRPAAPAASDKSRENSESLLNRFFLSRVVITTLSVSVILTFVNTSPVLLMEIMGFERGEYATIMALTAGVSMTVSFSTPFALGIFKPRTLMITSQVLFLAAGITLAVSPSHAISLFGITLICAGFSVGFGVAMSQALGPFSLRAGVASSTLGIAQVCGSSLWIWLAAVVGIGAWNMLIGILIACSIVSLLLIMFVAPGRPVAAHEEIHHHA</sequence>
<organism>
    <name type="scientific">Shigella dysenteriae serotype 1 (strain Sd197)</name>
    <dbReference type="NCBI Taxonomy" id="300267"/>
    <lineage>
        <taxon>Bacteria</taxon>
        <taxon>Pseudomonadati</taxon>
        <taxon>Pseudomonadota</taxon>
        <taxon>Gammaproteobacteria</taxon>
        <taxon>Enterobacterales</taxon>
        <taxon>Enterobacteriaceae</taxon>
        <taxon>Shigella</taxon>
    </lineage>
</organism>
<comment type="subcellular location">
    <subcellularLocation>
        <location evidence="2">Cell inner membrane</location>
        <topology evidence="2">Multi-pass membrane protein</topology>
    </subcellularLocation>
</comment>
<comment type="similarity">
    <text evidence="2">Belongs to the major facilitator superfamily. DHA1 family. MdtL (TC 2.A.1.2.22) subfamily.</text>
</comment>
<feature type="chain" id="PRO_0000282003" description="Multidrug resistance protein MdtL">
    <location>
        <begin position="1"/>
        <end position="391"/>
    </location>
</feature>
<feature type="topological domain" description="Cytoplasmic" evidence="1">
    <location>
        <begin position="1"/>
        <end position="3"/>
    </location>
</feature>
<feature type="transmembrane region" description="Helical" evidence="2">
    <location>
        <begin position="4"/>
        <end position="24"/>
    </location>
</feature>
<feature type="topological domain" description="Periplasmic" evidence="1">
    <location>
        <begin position="25"/>
        <end position="41"/>
    </location>
</feature>
<feature type="transmembrane region" description="Helical" evidence="2">
    <location>
        <begin position="42"/>
        <end position="62"/>
    </location>
</feature>
<feature type="topological domain" description="Cytoplasmic" evidence="1">
    <location>
        <begin position="63"/>
        <end position="68"/>
    </location>
</feature>
<feature type="transmembrane region" description="Helical" evidence="2">
    <location>
        <begin position="69"/>
        <end position="89"/>
    </location>
</feature>
<feature type="topological domain" description="Periplasmic" evidence="1">
    <location>
        <begin position="90"/>
        <end position="92"/>
    </location>
</feature>
<feature type="transmembrane region" description="Helical" evidence="2">
    <location>
        <begin position="93"/>
        <end position="113"/>
    </location>
</feature>
<feature type="topological domain" description="Cytoplasmic" evidence="1">
    <location>
        <begin position="114"/>
        <end position="130"/>
    </location>
</feature>
<feature type="transmembrane region" description="Helical" evidence="2">
    <location>
        <begin position="131"/>
        <end position="151"/>
    </location>
</feature>
<feature type="topological domain" description="Periplasmic" evidence="1">
    <location>
        <begin position="152"/>
        <end position="157"/>
    </location>
</feature>
<feature type="transmembrane region" description="Helical" evidence="2">
    <location>
        <begin position="158"/>
        <end position="178"/>
    </location>
</feature>
<feature type="topological domain" description="Cytoplasmic" evidence="1">
    <location>
        <begin position="179"/>
        <end position="198"/>
    </location>
</feature>
<feature type="transmembrane region" description="Helical" evidence="2">
    <location>
        <begin position="199"/>
        <end position="221"/>
    </location>
</feature>
<feature type="topological domain" description="Periplasmic" evidence="1">
    <location>
        <begin position="222"/>
        <end position="244"/>
    </location>
</feature>
<feature type="transmembrane region" description="Helical" evidence="2">
    <location>
        <begin position="245"/>
        <end position="265"/>
    </location>
</feature>
<feature type="topological domain" description="Cytoplasmic" evidence="1">
    <location>
        <begin position="266"/>
        <end position="268"/>
    </location>
</feature>
<feature type="transmembrane region" description="Helical" evidence="2">
    <location>
        <begin position="269"/>
        <end position="289"/>
    </location>
</feature>
<feature type="topological domain" description="Periplasmic" evidence="1">
    <location>
        <begin position="290"/>
        <end position="292"/>
    </location>
</feature>
<feature type="transmembrane region" description="Helical" evidence="2">
    <location>
        <begin position="293"/>
        <end position="313"/>
    </location>
</feature>
<feature type="topological domain" description="Cytoplasmic" evidence="1">
    <location>
        <begin position="314"/>
        <end position="330"/>
    </location>
</feature>
<feature type="transmembrane region" description="Helical" evidence="2">
    <location>
        <begin position="331"/>
        <end position="351"/>
    </location>
</feature>
<feature type="topological domain" description="Periplasmic" evidence="1">
    <location>
        <begin position="352"/>
        <end position="355"/>
    </location>
</feature>
<feature type="transmembrane region" description="Helical" evidence="2">
    <location>
        <begin position="356"/>
        <end position="376"/>
    </location>
</feature>
<feature type="topological domain" description="Cytoplasmic" evidence="1">
    <location>
        <begin position="377"/>
        <end position="391"/>
    </location>
</feature>
<dbReference type="EMBL" id="CP000034">
    <property type="protein sequence ID" value="ABB64107.1"/>
    <property type="molecule type" value="Genomic_DNA"/>
</dbReference>
<dbReference type="RefSeq" id="WP_000085995.1">
    <property type="nucleotide sequence ID" value="NC_007606.1"/>
</dbReference>
<dbReference type="RefSeq" id="YP_405598.1">
    <property type="nucleotide sequence ID" value="NC_007606.1"/>
</dbReference>
<dbReference type="SMR" id="Q328Z8"/>
<dbReference type="STRING" id="300267.SDY_4203"/>
<dbReference type="EnsemblBacteria" id="ABB64107">
    <property type="protein sequence ID" value="ABB64107"/>
    <property type="gene ID" value="SDY_4203"/>
</dbReference>
<dbReference type="KEGG" id="sdy:SDY_4203"/>
<dbReference type="PATRIC" id="fig|300267.13.peg.4943"/>
<dbReference type="HOGENOM" id="CLU_001265_47_1_6"/>
<dbReference type="Proteomes" id="UP000002716">
    <property type="component" value="Chromosome"/>
</dbReference>
<dbReference type="GO" id="GO:0005886">
    <property type="term" value="C:plasma membrane"/>
    <property type="evidence" value="ECO:0007669"/>
    <property type="project" value="UniProtKB-SubCell"/>
</dbReference>
<dbReference type="GO" id="GO:0022857">
    <property type="term" value="F:transmembrane transporter activity"/>
    <property type="evidence" value="ECO:0007669"/>
    <property type="project" value="UniProtKB-UniRule"/>
</dbReference>
<dbReference type="CDD" id="cd17320">
    <property type="entry name" value="MFS_MdfA_MDR_like"/>
    <property type="match status" value="1"/>
</dbReference>
<dbReference type="FunFam" id="1.20.1720.10:FF:000003">
    <property type="entry name" value="Multidrug resistance protein MdtL"/>
    <property type="match status" value="1"/>
</dbReference>
<dbReference type="Gene3D" id="1.20.1720.10">
    <property type="entry name" value="Multidrug resistance protein D"/>
    <property type="match status" value="1"/>
</dbReference>
<dbReference type="HAMAP" id="MF_01530">
    <property type="entry name" value="MFS_MdtL"/>
    <property type="match status" value="1"/>
</dbReference>
<dbReference type="InterPro" id="IPR011701">
    <property type="entry name" value="MFS"/>
</dbReference>
<dbReference type="InterPro" id="IPR020846">
    <property type="entry name" value="MFS_dom"/>
</dbReference>
<dbReference type="InterPro" id="IPR050189">
    <property type="entry name" value="MFS_Efflux_Transporters"/>
</dbReference>
<dbReference type="InterPro" id="IPR036259">
    <property type="entry name" value="MFS_trans_sf"/>
</dbReference>
<dbReference type="InterPro" id="IPR023697">
    <property type="entry name" value="Multidrug-R_MdtL"/>
</dbReference>
<dbReference type="NCBIfam" id="NF007782">
    <property type="entry name" value="PRK10473.1"/>
    <property type="match status" value="1"/>
</dbReference>
<dbReference type="PANTHER" id="PTHR43124:SF3">
    <property type="entry name" value="CHLORAMPHENICOL EFFLUX PUMP RV0191"/>
    <property type="match status" value="1"/>
</dbReference>
<dbReference type="PANTHER" id="PTHR43124">
    <property type="entry name" value="PURINE EFFLUX PUMP PBUE"/>
    <property type="match status" value="1"/>
</dbReference>
<dbReference type="Pfam" id="PF07690">
    <property type="entry name" value="MFS_1"/>
    <property type="match status" value="1"/>
</dbReference>
<dbReference type="SUPFAM" id="SSF103473">
    <property type="entry name" value="MFS general substrate transporter"/>
    <property type="match status" value="1"/>
</dbReference>
<dbReference type="PROSITE" id="PS50850">
    <property type="entry name" value="MFS"/>
    <property type="match status" value="1"/>
</dbReference>
<keyword id="KW-0997">Cell inner membrane</keyword>
<keyword id="KW-1003">Cell membrane</keyword>
<keyword id="KW-0472">Membrane</keyword>
<keyword id="KW-1185">Reference proteome</keyword>
<keyword id="KW-0812">Transmembrane</keyword>
<keyword id="KW-1133">Transmembrane helix</keyword>
<keyword id="KW-0813">Transport</keyword>
<accession>Q328Z8</accession>
<evidence type="ECO:0000255" key="1"/>
<evidence type="ECO:0000255" key="2">
    <source>
        <dbReference type="HAMAP-Rule" id="MF_01530"/>
    </source>
</evidence>